<dbReference type="EC" id="2.4.2.10" evidence="1"/>
<dbReference type="EMBL" id="CP000720">
    <property type="protein sequence ID" value="ABS49216.1"/>
    <property type="molecule type" value="Genomic_DNA"/>
</dbReference>
<dbReference type="RefSeq" id="WP_002208996.1">
    <property type="nucleotide sequence ID" value="NC_009708.1"/>
</dbReference>
<dbReference type="SMR" id="A7FCT0"/>
<dbReference type="GeneID" id="57974545"/>
<dbReference type="KEGG" id="ypi:YpsIP31758_0057"/>
<dbReference type="HOGENOM" id="CLU_074878_0_1_6"/>
<dbReference type="UniPathway" id="UPA00070">
    <property type="reaction ID" value="UER00119"/>
</dbReference>
<dbReference type="Proteomes" id="UP000002412">
    <property type="component" value="Chromosome"/>
</dbReference>
<dbReference type="GO" id="GO:0005737">
    <property type="term" value="C:cytoplasm"/>
    <property type="evidence" value="ECO:0007669"/>
    <property type="project" value="TreeGrafter"/>
</dbReference>
<dbReference type="GO" id="GO:0000287">
    <property type="term" value="F:magnesium ion binding"/>
    <property type="evidence" value="ECO:0007669"/>
    <property type="project" value="UniProtKB-UniRule"/>
</dbReference>
<dbReference type="GO" id="GO:0004588">
    <property type="term" value="F:orotate phosphoribosyltransferase activity"/>
    <property type="evidence" value="ECO:0007669"/>
    <property type="project" value="UniProtKB-UniRule"/>
</dbReference>
<dbReference type="GO" id="GO:0006207">
    <property type="term" value="P:'de novo' pyrimidine nucleobase biosynthetic process"/>
    <property type="evidence" value="ECO:0007669"/>
    <property type="project" value="TreeGrafter"/>
</dbReference>
<dbReference type="GO" id="GO:0044205">
    <property type="term" value="P:'de novo' UMP biosynthetic process"/>
    <property type="evidence" value="ECO:0007669"/>
    <property type="project" value="UniProtKB-UniRule"/>
</dbReference>
<dbReference type="GO" id="GO:0046132">
    <property type="term" value="P:pyrimidine ribonucleoside biosynthetic process"/>
    <property type="evidence" value="ECO:0007669"/>
    <property type="project" value="TreeGrafter"/>
</dbReference>
<dbReference type="CDD" id="cd06223">
    <property type="entry name" value="PRTases_typeI"/>
    <property type="match status" value="1"/>
</dbReference>
<dbReference type="FunFam" id="3.40.50.2020:FF:000008">
    <property type="entry name" value="Orotate phosphoribosyltransferase"/>
    <property type="match status" value="1"/>
</dbReference>
<dbReference type="Gene3D" id="3.40.50.2020">
    <property type="match status" value="1"/>
</dbReference>
<dbReference type="HAMAP" id="MF_01208">
    <property type="entry name" value="PyrE"/>
    <property type="match status" value="1"/>
</dbReference>
<dbReference type="InterPro" id="IPR023031">
    <property type="entry name" value="OPRT"/>
</dbReference>
<dbReference type="InterPro" id="IPR004467">
    <property type="entry name" value="Or_phspho_trans_dom"/>
</dbReference>
<dbReference type="InterPro" id="IPR000836">
    <property type="entry name" value="PRibTrfase_dom"/>
</dbReference>
<dbReference type="InterPro" id="IPR029057">
    <property type="entry name" value="PRTase-like"/>
</dbReference>
<dbReference type="NCBIfam" id="TIGR00336">
    <property type="entry name" value="pyrE"/>
    <property type="match status" value="1"/>
</dbReference>
<dbReference type="PANTHER" id="PTHR46683">
    <property type="entry name" value="OROTATE PHOSPHORIBOSYLTRANSFERASE 1-RELATED"/>
    <property type="match status" value="1"/>
</dbReference>
<dbReference type="PANTHER" id="PTHR46683:SF1">
    <property type="entry name" value="OROTATE PHOSPHORIBOSYLTRANSFERASE 1-RELATED"/>
    <property type="match status" value="1"/>
</dbReference>
<dbReference type="Pfam" id="PF00156">
    <property type="entry name" value="Pribosyltran"/>
    <property type="match status" value="1"/>
</dbReference>
<dbReference type="SUPFAM" id="SSF53271">
    <property type="entry name" value="PRTase-like"/>
    <property type="match status" value="1"/>
</dbReference>
<dbReference type="PROSITE" id="PS00103">
    <property type="entry name" value="PUR_PYR_PR_TRANSFER"/>
    <property type="match status" value="1"/>
</dbReference>
<proteinExistence type="inferred from homology"/>
<gene>
    <name evidence="1" type="primary">pyrE</name>
    <name type="ordered locus">YpsIP31758_0057</name>
</gene>
<protein>
    <recommendedName>
        <fullName evidence="1">Orotate phosphoribosyltransferase</fullName>
        <shortName evidence="1">OPRT</shortName>
        <shortName evidence="1">OPRTase</shortName>
        <ecNumber evidence="1">2.4.2.10</ecNumber>
    </recommendedName>
</protein>
<reference key="1">
    <citation type="journal article" date="2007" name="PLoS Genet.">
        <title>The complete genome sequence of Yersinia pseudotuberculosis IP31758, the causative agent of Far East scarlet-like fever.</title>
        <authorList>
            <person name="Eppinger M."/>
            <person name="Rosovitz M.J."/>
            <person name="Fricke W.F."/>
            <person name="Rasko D.A."/>
            <person name="Kokorina G."/>
            <person name="Fayolle C."/>
            <person name="Lindler L.E."/>
            <person name="Carniel E."/>
            <person name="Ravel J."/>
        </authorList>
    </citation>
    <scope>NUCLEOTIDE SEQUENCE [LARGE SCALE GENOMIC DNA]</scope>
    <source>
        <strain>IP 31758</strain>
    </source>
</reference>
<feature type="chain" id="PRO_1000066328" description="Orotate phosphoribosyltransferase">
    <location>
        <begin position="1"/>
        <end position="215"/>
    </location>
</feature>
<feature type="binding site" description="in other chain" evidence="1">
    <location>
        <position position="26"/>
    </location>
    <ligand>
        <name>5-phospho-alpha-D-ribose 1-diphosphate</name>
        <dbReference type="ChEBI" id="CHEBI:58017"/>
        <note>ligand shared between dimeric partners</note>
    </ligand>
</feature>
<feature type="binding site" evidence="1">
    <location>
        <begin position="34"/>
        <end position="35"/>
    </location>
    <ligand>
        <name>orotate</name>
        <dbReference type="ChEBI" id="CHEBI:30839"/>
    </ligand>
</feature>
<feature type="binding site" description="in other chain" evidence="1">
    <location>
        <begin position="72"/>
        <end position="73"/>
    </location>
    <ligand>
        <name>5-phospho-alpha-D-ribose 1-diphosphate</name>
        <dbReference type="ChEBI" id="CHEBI:58017"/>
        <note>ligand shared between dimeric partners</note>
    </ligand>
</feature>
<feature type="binding site" evidence="1">
    <location>
        <position position="99"/>
    </location>
    <ligand>
        <name>5-phospho-alpha-D-ribose 1-diphosphate</name>
        <dbReference type="ChEBI" id="CHEBI:58017"/>
        <note>ligand shared between dimeric partners</note>
    </ligand>
</feature>
<feature type="binding site" description="in other chain" evidence="1">
    <location>
        <position position="100"/>
    </location>
    <ligand>
        <name>5-phospho-alpha-D-ribose 1-diphosphate</name>
        <dbReference type="ChEBI" id="CHEBI:58017"/>
        <note>ligand shared between dimeric partners</note>
    </ligand>
</feature>
<feature type="binding site" evidence="1">
    <location>
        <position position="103"/>
    </location>
    <ligand>
        <name>5-phospho-alpha-D-ribose 1-diphosphate</name>
        <dbReference type="ChEBI" id="CHEBI:58017"/>
        <note>ligand shared between dimeric partners</note>
    </ligand>
</feature>
<feature type="binding site" evidence="1">
    <location>
        <position position="105"/>
    </location>
    <ligand>
        <name>5-phospho-alpha-D-ribose 1-diphosphate</name>
        <dbReference type="ChEBI" id="CHEBI:58017"/>
        <note>ligand shared between dimeric partners</note>
    </ligand>
</feature>
<feature type="binding site" description="in other chain" evidence="1">
    <location>
        <begin position="124"/>
        <end position="132"/>
    </location>
    <ligand>
        <name>5-phospho-alpha-D-ribose 1-diphosphate</name>
        <dbReference type="ChEBI" id="CHEBI:58017"/>
        <note>ligand shared between dimeric partners</note>
    </ligand>
</feature>
<feature type="binding site" evidence="1">
    <location>
        <position position="128"/>
    </location>
    <ligand>
        <name>orotate</name>
        <dbReference type="ChEBI" id="CHEBI:30839"/>
    </ligand>
</feature>
<feature type="binding site" evidence="1">
    <location>
        <position position="156"/>
    </location>
    <ligand>
        <name>orotate</name>
        <dbReference type="ChEBI" id="CHEBI:30839"/>
    </ligand>
</feature>
<name>PYRE_YERP3</name>
<organism>
    <name type="scientific">Yersinia pseudotuberculosis serotype O:1b (strain IP 31758)</name>
    <dbReference type="NCBI Taxonomy" id="349747"/>
    <lineage>
        <taxon>Bacteria</taxon>
        <taxon>Pseudomonadati</taxon>
        <taxon>Pseudomonadota</taxon>
        <taxon>Gammaproteobacteria</taxon>
        <taxon>Enterobacterales</taxon>
        <taxon>Yersiniaceae</taxon>
        <taxon>Yersinia</taxon>
    </lineage>
</organism>
<accession>A7FCT0</accession>
<comment type="function">
    <text evidence="1">Catalyzes the transfer of a ribosyl phosphate group from 5-phosphoribose 1-diphosphate to orotate, leading to the formation of orotidine monophosphate (OMP).</text>
</comment>
<comment type="catalytic activity">
    <reaction evidence="1">
        <text>orotidine 5'-phosphate + diphosphate = orotate + 5-phospho-alpha-D-ribose 1-diphosphate</text>
        <dbReference type="Rhea" id="RHEA:10380"/>
        <dbReference type="ChEBI" id="CHEBI:30839"/>
        <dbReference type="ChEBI" id="CHEBI:33019"/>
        <dbReference type="ChEBI" id="CHEBI:57538"/>
        <dbReference type="ChEBI" id="CHEBI:58017"/>
        <dbReference type="EC" id="2.4.2.10"/>
    </reaction>
</comment>
<comment type="cofactor">
    <cofactor evidence="1">
        <name>Mg(2+)</name>
        <dbReference type="ChEBI" id="CHEBI:18420"/>
    </cofactor>
</comment>
<comment type="pathway">
    <text evidence="1">Pyrimidine metabolism; UMP biosynthesis via de novo pathway; UMP from orotate: step 1/2.</text>
</comment>
<comment type="subunit">
    <text evidence="1">Homodimer.</text>
</comment>
<comment type="similarity">
    <text evidence="1">Belongs to the purine/pyrimidine phosphoribosyltransferase family. PyrE subfamily.</text>
</comment>
<evidence type="ECO:0000255" key="1">
    <source>
        <dbReference type="HAMAP-Rule" id="MF_01208"/>
    </source>
</evidence>
<sequence>MKAYQREFIEFALNKQVLKFGEFTLKSGRISPYFFNAGLFNTGLDLAKLGRFYAAALMDCGVEFDLLFGPAYKGIPIATTTAVALAEHHERDVPYCFNRKEAKTHGEGGNLVGSPLQGRVMLVDDVITAGTAIRESMEIINAQGATLAGVMISLDRQERGRGEISAIQEVERDYHCKVIAIVTLNDVIRYLEDKPEMAEHLVAVRQYREQYGVTL</sequence>
<keyword id="KW-0328">Glycosyltransferase</keyword>
<keyword id="KW-0460">Magnesium</keyword>
<keyword id="KW-0665">Pyrimidine biosynthesis</keyword>
<keyword id="KW-0808">Transferase</keyword>